<accession>C5D4A2</accession>
<comment type="function">
    <text evidence="1">The glycine cleavage system catalyzes the degradation of glycine.</text>
</comment>
<comment type="catalytic activity">
    <reaction evidence="1">
        <text>N(6)-[(R)-S(8)-aminomethyldihydrolipoyl]-L-lysyl-[protein] + (6S)-5,6,7,8-tetrahydrofolate = N(6)-[(R)-dihydrolipoyl]-L-lysyl-[protein] + (6R)-5,10-methylene-5,6,7,8-tetrahydrofolate + NH4(+)</text>
        <dbReference type="Rhea" id="RHEA:16945"/>
        <dbReference type="Rhea" id="RHEA-COMP:10475"/>
        <dbReference type="Rhea" id="RHEA-COMP:10492"/>
        <dbReference type="ChEBI" id="CHEBI:15636"/>
        <dbReference type="ChEBI" id="CHEBI:28938"/>
        <dbReference type="ChEBI" id="CHEBI:57453"/>
        <dbReference type="ChEBI" id="CHEBI:83100"/>
        <dbReference type="ChEBI" id="CHEBI:83143"/>
        <dbReference type="EC" id="2.1.2.10"/>
    </reaction>
</comment>
<comment type="subunit">
    <text evidence="1">The glycine cleavage system is composed of four proteins: P, T, L and H.</text>
</comment>
<comment type="similarity">
    <text evidence="1">Belongs to the GcvT family.</text>
</comment>
<organism>
    <name type="scientific">Geobacillus sp. (strain WCH70)</name>
    <dbReference type="NCBI Taxonomy" id="471223"/>
    <lineage>
        <taxon>Bacteria</taxon>
        <taxon>Bacillati</taxon>
        <taxon>Bacillota</taxon>
        <taxon>Bacilli</taxon>
        <taxon>Bacillales</taxon>
        <taxon>Anoxybacillaceae</taxon>
        <taxon>Geobacillus</taxon>
    </lineage>
</organism>
<proteinExistence type="inferred from homology"/>
<feature type="chain" id="PRO_1000204637" description="Aminomethyltransferase">
    <location>
        <begin position="1"/>
        <end position="364"/>
    </location>
</feature>
<sequence>MLKRTPLFAVYERYGAKTIDFGGWELPVQFSSIKEEHEAVRTRAGLFDVSHMGEFVVKGDDSLAFLQKMMTNDVSKLTDGRVQYSLMCYEDGGTVDDLLIYKKADGHYLLVVNAANIEKDFEWLHGHLFGDVELVNISQEIAQLALQGPLAEQVLQKLTNTDLSAIKFFSFQDDININGVKALVSRTGYTGEDGFEIYCRREDAVALWESILEAGKEEGVLPCGLGARDTLRFEATLPLYGQELSKDITPIEAGLGFAVKTNKDADFIGKDVLKKQKEEGTARKLVGIEMIDKGIPRHGYKVFANGEEIGFVTTGTQSPTLKKNIGLALIKTEFTEMDTEVEVEIRGKRLKAKVIATPFYKRAK</sequence>
<keyword id="KW-0032">Aminotransferase</keyword>
<keyword id="KW-0808">Transferase</keyword>
<dbReference type="EC" id="2.1.2.10" evidence="1"/>
<dbReference type="EMBL" id="CP001638">
    <property type="protein sequence ID" value="ACS25058.1"/>
    <property type="molecule type" value="Genomic_DNA"/>
</dbReference>
<dbReference type="SMR" id="C5D4A2"/>
<dbReference type="STRING" id="471223.GWCH70_2361"/>
<dbReference type="KEGG" id="gwc:GWCH70_2361"/>
<dbReference type="eggNOG" id="COG0404">
    <property type="taxonomic scope" value="Bacteria"/>
</dbReference>
<dbReference type="HOGENOM" id="CLU_007884_10_2_9"/>
<dbReference type="OrthoDB" id="9774591at2"/>
<dbReference type="GO" id="GO:0005829">
    <property type="term" value="C:cytosol"/>
    <property type="evidence" value="ECO:0007669"/>
    <property type="project" value="TreeGrafter"/>
</dbReference>
<dbReference type="GO" id="GO:0005960">
    <property type="term" value="C:glycine cleavage complex"/>
    <property type="evidence" value="ECO:0007669"/>
    <property type="project" value="InterPro"/>
</dbReference>
<dbReference type="GO" id="GO:0004047">
    <property type="term" value="F:aminomethyltransferase activity"/>
    <property type="evidence" value="ECO:0007669"/>
    <property type="project" value="UniProtKB-UniRule"/>
</dbReference>
<dbReference type="GO" id="GO:0008483">
    <property type="term" value="F:transaminase activity"/>
    <property type="evidence" value="ECO:0007669"/>
    <property type="project" value="UniProtKB-KW"/>
</dbReference>
<dbReference type="GO" id="GO:0019464">
    <property type="term" value="P:glycine decarboxylation via glycine cleavage system"/>
    <property type="evidence" value="ECO:0007669"/>
    <property type="project" value="UniProtKB-UniRule"/>
</dbReference>
<dbReference type="FunFam" id="2.40.30.110:FF:000003">
    <property type="entry name" value="Aminomethyltransferase"/>
    <property type="match status" value="1"/>
</dbReference>
<dbReference type="FunFam" id="3.30.70.1400:FF:000001">
    <property type="entry name" value="Aminomethyltransferase"/>
    <property type="match status" value="1"/>
</dbReference>
<dbReference type="FunFam" id="4.10.1250.10:FF:000001">
    <property type="entry name" value="Aminomethyltransferase"/>
    <property type="match status" value="1"/>
</dbReference>
<dbReference type="Gene3D" id="2.40.30.110">
    <property type="entry name" value="Aminomethyltransferase beta-barrel domains"/>
    <property type="match status" value="1"/>
</dbReference>
<dbReference type="Gene3D" id="3.30.70.1400">
    <property type="entry name" value="Aminomethyltransferase beta-barrel domains"/>
    <property type="match status" value="1"/>
</dbReference>
<dbReference type="Gene3D" id="4.10.1250.10">
    <property type="entry name" value="Aminomethyltransferase fragment"/>
    <property type="match status" value="1"/>
</dbReference>
<dbReference type="Gene3D" id="3.30.1360.120">
    <property type="entry name" value="Probable tRNA modification gtpase trme, domain 1"/>
    <property type="match status" value="1"/>
</dbReference>
<dbReference type="HAMAP" id="MF_00259">
    <property type="entry name" value="GcvT"/>
    <property type="match status" value="1"/>
</dbReference>
<dbReference type="InterPro" id="IPR006223">
    <property type="entry name" value="GCS_T"/>
</dbReference>
<dbReference type="InterPro" id="IPR022903">
    <property type="entry name" value="GCS_T_bac"/>
</dbReference>
<dbReference type="InterPro" id="IPR013977">
    <property type="entry name" value="GCST_C"/>
</dbReference>
<dbReference type="InterPro" id="IPR006222">
    <property type="entry name" value="GCV_T_N"/>
</dbReference>
<dbReference type="InterPro" id="IPR028896">
    <property type="entry name" value="GcvT/YgfZ/DmdA"/>
</dbReference>
<dbReference type="InterPro" id="IPR029043">
    <property type="entry name" value="GcvT/YgfZ_C"/>
</dbReference>
<dbReference type="InterPro" id="IPR027266">
    <property type="entry name" value="TrmE/GcvT_dom1"/>
</dbReference>
<dbReference type="NCBIfam" id="TIGR00528">
    <property type="entry name" value="gcvT"/>
    <property type="match status" value="1"/>
</dbReference>
<dbReference type="NCBIfam" id="NF001567">
    <property type="entry name" value="PRK00389.1"/>
    <property type="match status" value="1"/>
</dbReference>
<dbReference type="PANTHER" id="PTHR43757">
    <property type="entry name" value="AMINOMETHYLTRANSFERASE"/>
    <property type="match status" value="1"/>
</dbReference>
<dbReference type="PANTHER" id="PTHR43757:SF2">
    <property type="entry name" value="AMINOMETHYLTRANSFERASE, MITOCHONDRIAL"/>
    <property type="match status" value="1"/>
</dbReference>
<dbReference type="Pfam" id="PF01571">
    <property type="entry name" value="GCV_T"/>
    <property type="match status" value="1"/>
</dbReference>
<dbReference type="Pfam" id="PF08669">
    <property type="entry name" value="GCV_T_C"/>
    <property type="match status" value="1"/>
</dbReference>
<dbReference type="PIRSF" id="PIRSF006487">
    <property type="entry name" value="GcvT"/>
    <property type="match status" value="1"/>
</dbReference>
<dbReference type="SUPFAM" id="SSF101790">
    <property type="entry name" value="Aminomethyltransferase beta-barrel domain"/>
    <property type="match status" value="1"/>
</dbReference>
<dbReference type="SUPFAM" id="SSF103025">
    <property type="entry name" value="Folate-binding domain"/>
    <property type="match status" value="1"/>
</dbReference>
<gene>
    <name evidence="1" type="primary">gcvT</name>
    <name type="ordered locus">GWCH70_2361</name>
</gene>
<protein>
    <recommendedName>
        <fullName evidence="1">Aminomethyltransferase</fullName>
        <ecNumber evidence="1">2.1.2.10</ecNumber>
    </recommendedName>
    <alternativeName>
        <fullName evidence="1">Glycine cleavage system T protein</fullName>
    </alternativeName>
</protein>
<reference key="1">
    <citation type="submission" date="2009-06" db="EMBL/GenBank/DDBJ databases">
        <title>Complete sequence of chromosome of Geopacillus sp. WCH70.</title>
        <authorList>
            <consortium name="US DOE Joint Genome Institute"/>
            <person name="Lucas S."/>
            <person name="Copeland A."/>
            <person name="Lapidus A."/>
            <person name="Glavina del Rio T."/>
            <person name="Dalin E."/>
            <person name="Tice H."/>
            <person name="Bruce D."/>
            <person name="Goodwin L."/>
            <person name="Pitluck S."/>
            <person name="Chertkov O."/>
            <person name="Brettin T."/>
            <person name="Detter J.C."/>
            <person name="Han C."/>
            <person name="Larimer F."/>
            <person name="Land M."/>
            <person name="Hauser L."/>
            <person name="Kyrpides N."/>
            <person name="Mikhailova N."/>
            <person name="Brumm P."/>
            <person name="Mead D.A."/>
            <person name="Richardson P."/>
        </authorList>
    </citation>
    <scope>NUCLEOTIDE SEQUENCE [LARGE SCALE GENOMIC DNA]</scope>
    <source>
        <strain>WCH70</strain>
    </source>
</reference>
<name>GCST_GEOSW</name>
<evidence type="ECO:0000255" key="1">
    <source>
        <dbReference type="HAMAP-Rule" id="MF_00259"/>
    </source>
</evidence>